<name>SRSF6_RAT</name>
<accession>G3V6S8</accession>
<accession>Q5PQM1</accession>
<dbReference type="EMBL" id="AABR06027490">
    <property type="status" value="NOT_ANNOTATED_CDS"/>
    <property type="molecule type" value="Genomic_DNA"/>
</dbReference>
<dbReference type="EMBL" id="CH474005">
    <property type="protein sequence ID" value="EDL96600.1"/>
    <property type="molecule type" value="Genomic_DNA"/>
</dbReference>
<dbReference type="EMBL" id="BC087121">
    <property type="protein sequence ID" value="AAH87121.1"/>
    <property type="molecule type" value="mRNA"/>
</dbReference>
<dbReference type="RefSeq" id="NP_001014207.2">
    <property type="nucleotide sequence ID" value="NM_001014185.2"/>
</dbReference>
<dbReference type="SMR" id="G3V6S8"/>
<dbReference type="BioGRID" id="263314">
    <property type="interactions" value="3"/>
</dbReference>
<dbReference type="FunCoup" id="G3V6S8">
    <property type="interactions" value="3741"/>
</dbReference>
<dbReference type="IntAct" id="G3V6S8">
    <property type="interactions" value="2"/>
</dbReference>
<dbReference type="MINT" id="G3V6S8"/>
<dbReference type="STRING" id="10116.ENSRNOP00000008427"/>
<dbReference type="iPTMnet" id="G3V6S8"/>
<dbReference type="PhosphoSitePlus" id="G3V6S8"/>
<dbReference type="jPOST" id="G3V6S8"/>
<dbReference type="PaxDb" id="10116-ENSRNOP00000008427"/>
<dbReference type="Ensembl" id="ENSRNOT00000008427.7">
    <property type="protein sequence ID" value="ENSRNOP00000008427.5"/>
    <property type="gene ID" value="ENSRNOG00000006380.7"/>
</dbReference>
<dbReference type="GeneID" id="362264"/>
<dbReference type="KEGG" id="rno:362264"/>
<dbReference type="UCSC" id="RGD:1359241">
    <property type="organism name" value="rat"/>
</dbReference>
<dbReference type="AGR" id="RGD:1359241"/>
<dbReference type="CTD" id="6431"/>
<dbReference type="RGD" id="1359241">
    <property type="gene designation" value="Srsf6"/>
</dbReference>
<dbReference type="eggNOG" id="KOG0106">
    <property type="taxonomic scope" value="Eukaryota"/>
</dbReference>
<dbReference type="GeneTree" id="ENSGT00940000155448"/>
<dbReference type="HOGENOM" id="CLU_012062_34_2_1"/>
<dbReference type="InParanoid" id="G3V6S8"/>
<dbReference type="OMA" id="HQPAKAH"/>
<dbReference type="OrthoDB" id="1099063at2759"/>
<dbReference type="PhylomeDB" id="G3V6S8"/>
<dbReference type="TreeFam" id="TF351335"/>
<dbReference type="PRO" id="PR:G3V6S8"/>
<dbReference type="Proteomes" id="UP000002494">
    <property type="component" value="Chromosome 3"/>
</dbReference>
<dbReference type="Proteomes" id="UP000234681">
    <property type="component" value="Chromosome 3"/>
</dbReference>
<dbReference type="Bgee" id="ENSRNOG00000006380">
    <property type="expression patterns" value="Expressed in thymus and 20 other cell types or tissues"/>
</dbReference>
<dbReference type="GO" id="GO:0005737">
    <property type="term" value="C:cytoplasm"/>
    <property type="evidence" value="ECO:0000318"/>
    <property type="project" value="GO_Central"/>
</dbReference>
<dbReference type="GO" id="GO:0016607">
    <property type="term" value="C:nuclear speck"/>
    <property type="evidence" value="ECO:0000250"/>
    <property type="project" value="UniProtKB"/>
</dbReference>
<dbReference type="GO" id="GO:0005634">
    <property type="term" value="C:nucleus"/>
    <property type="evidence" value="ECO:0000318"/>
    <property type="project" value="GO_Central"/>
</dbReference>
<dbReference type="GO" id="GO:0003729">
    <property type="term" value="F:mRNA binding"/>
    <property type="evidence" value="ECO:0000318"/>
    <property type="project" value="GO_Central"/>
</dbReference>
<dbReference type="GO" id="GO:0036002">
    <property type="term" value="F:pre-mRNA binding"/>
    <property type="evidence" value="ECO:0000250"/>
    <property type="project" value="UniProtKB"/>
</dbReference>
<dbReference type="GO" id="GO:0003723">
    <property type="term" value="F:RNA binding"/>
    <property type="evidence" value="ECO:0000250"/>
    <property type="project" value="UniProtKB"/>
</dbReference>
<dbReference type="GO" id="GO:0000380">
    <property type="term" value="P:alternative mRNA splicing, via spliceosome"/>
    <property type="evidence" value="ECO:0000250"/>
    <property type="project" value="UniProtKB"/>
</dbReference>
<dbReference type="GO" id="GO:0006376">
    <property type="term" value="P:mRNA splice site recognition"/>
    <property type="evidence" value="ECO:0000250"/>
    <property type="project" value="UniProtKB"/>
</dbReference>
<dbReference type="GO" id="GO:0010629">
    <property type="term" value="P:negative regulation of gene expression"/>
    <property type="evidence" value="ECO:0000315"/>
    <property type="project" value="RGD"/>
</dbReference>
<dbReference type="GO" id="GO:0045617">
    <property type="term" value="P:negative regulation of keratinocyte differentiation"/>
    <property type="evidence" value="ECO:0000250"/>
    <property type="project" value="UniProtKB"/>
</dbReference>
<dbReference type="GO" id="GO:0048025">
    <property type="term" value="P:negative regulation of mRNA splicing, via spliceosome"/>
    <property type="evidence" value="ECO:0000266"/>
    <property type="project" value="RGD"/>
</dbReference>
<dbReference type="GO" id="GO:2000675">
    <property type="term" value="P:negative regulation of type B pancreatic cell apoptotic process"/>
    <property type="evidence" value="ECO:0000315"/>
    <property type="project" value="RGD"/>
</dbReference>
<dbReference type="GO" id="GO:0060501">
    <property type="term" value="P:positive regulation of epithelial cell proliferation involved in lung morphogenesis"/>
    <property type="evidence" value="ECO:0000266"/>
    <property type="project" value="RGD"/>
</dbReference>
<dbReference type="GO" id="GO:0000381">
    <property type="term" value="P:regulation of alternative mRNA splicing, via spliceosome"/>
    <property type="evidence" value="ECO:0000250"/>
    <property type="project" value="UniProtKB"/>
</dbReference>
<dbReference type="GO" id="GO:0010837">
    <property type="term" value="P:regulation of keratinocyte proliferation"/>
    <property type="evidence" value="ECO:0000250"/>
    <property type="project" value="UniProtKB"/>
</dbReference>
<dbReference type="GO" id="GO:0061041">
    <property type="term" value="P:regulation of wound healing"/>
    <property type="evidence" value="ECO:0000250"/>
    <property type="project" value="UniProtKB"/>
</dbReference>
<dbReference type="GO" id="GO:0032868">
    <property type="term" value="P:response to insulin"/>
    <property type="evidence" value="ECO:0000270"/>
    <property type="project" value="RGD"/>
</dbReference>
<dbReference type="CDD" id="cd12600">
    <property type="entry name" value="RRM2_SRSF4_like"/>
    <property type="match status" value="1"/>
</dbReference>
<dbReference type="FunFam" id="3.30.70.330:FF:000028">
    <property type="entry name" value="Putative serine/arginine-rich splicing factor 4"/>
    <property type="match status" value="1"/>
</dbReference>
<dbReference type="FunFam" id="3.30.70.330:FF:000190">
    <property type="entry name" value="serine/arginine-rich splicing factor 4 isoform X1"/>
    <property type="match status" value="1"/>
</dbReference>
<dbReference type="Gene3D" id="3.30.70.330">
    <property type="match status" value="2"/>
</dbReference>
<dbReference type="InterPro" id="IPR012677">
    <property type="entry name" value="Nucleotide-bd_a/b_plait_sf"/>
</dbReference>
<dbReference type="InterPro" id="IPR035979">
    <property type="entry name" value="RBD_domain_sf"/>
</dbReference>
<dbReference type="InterPro" id="IPR047190">
    <property type="entry name" value="RRM2_SRSF4/6"/>
</dbReference>
<dbReference type="InterPro" id="IPR000504">
    <property type="entry name" value="RRM_dom"/>
</dbReference>
<dbReference type="InterPro" id="IPR050374">
    <property type="entry name" value="RRT5_SRSF_SR"/>
</dbReference>
<dbReference type="PANTHER" id="PTHR23003">
    <property type="entry name" value="RNA RECOGNITION MOTIF RRM DOMAIN CONTAINING PROTEIN"/>
    <property type="match status" value="1"/>
</dbReference>
<dbReference type="PANTHER" id="PTHR23003:SF52">
    <property type="entry name" value="SERINE_ARGININE-RICH SPLICING FACTOR 6"/>
    <property type="match status" value="1"/>
</dbReference>
<dbReference type="Pfam" id="PF00076">
    <property type="entry name" value="RRM_1"/>
    <property type="match status" value="2"/>
</dbReference>
<dbReference type="SMART" id="SM00360">
    <property type="entry name" value="RRM"/>
    <property type="match status" value="2"/>
</dbReference>
<dbReference type="SUPFAM" id="SSF54928">
    <property type="entry name" value="RNA-binding domain, RBD"/>
    <property type="match status" value="2"/>
</dbReference>
<dbReference type="PROSITE" id="PS50102">
    <property type="entry name" value="RRM"/>
    <property type="match status" value="2"/>
</dbReference>
<sequence length="339" mass="39025">MPRVYIGRLSYNVREKDIQRFFSGYGRLLEIDLKNGYGFVEFEDSRDADDAVYELNSKELCGERVIVEHARGPRRDRDGYSYGSRSGGGGYSSRRTSGRDKYGPPVRTEYRLIVENLSSRCSWQDLKDFMRQAGEVTYADAHKERTNEGVIEFRSYSDMKRALDKLDGTEINGRNIRLIEDKPRTSHRRSYSGSRSRSRSRRRSRSRSRRSSRSRSRSISKSRSRSRSRSKGRSRSRSKGRKSRSKSKSKPKSDRGSHSHSRSRSKDKYGKSRSRSRSRSPKENGKGDIKSKSRSRSQSRSHSPLPAPPSKARSMSPPPKRASRSRSRSRSRSRSSSRD</sequence>
<keyword id="KW-0007">Acetylation</keyword>
<keyword id="KW-1017">Isopeptide bond</keyword>
<keyword id="KW-0507">mRNA processing</keyword>
<keyword id="KW-0508">mRNA splicing</keyword>
<keyword id="KW-0539">Nucleus</keyword>
<keyword id="KW-0597">Phosphoprotein</keyword>
<keyword id="KW-1185">Reference proteome</keyword>
<keyword id="KW-0677">Repeat</keyword>
<keyword id="KW-0678">Repressor</keyword>
<keyword id="KW-0694">RNA-binding</keyword>
<keyword id="KW-0832">Ubl conjugation</keyword>
<protein>
    <recommendedName>
        <fullName>Serine/arginine-rich splicing factor 6</fullName>
    </recommendedName>
    <alternativeName>
        <fullName>Pre-mRNA-splicing factor SRP55</fullName>
    </alternativeName>
    <alternativeName>
        <fullName>Splicing factor, arginine/serine-rich 6</fullName>
    </alternativeName>
</protein>
<proteinExistence type="evidence at protein level"/>
<reference key="1">
    <citation type="journal article" date="2004" name="Nature">
        <title>Genome sequence of the Brown Norway rat yields insights into mammalian evolution.</title>
        <authorList>
            <person name="Gibbs R.A."/>
            <person name="Weinstock G.M."/>
            <person name="Metzker M.L."/>
            <person name="Muzny D.M."/>
            <person name="Sodergren E.J."/>
            <person name="Scherer S."/>
            <person name="Scott G."/>
            <person name="Steffen D."/>
            <person name="Worley K.C."/>
            <person name="Burch P.E."/>
            <person name="Okwuonu G."/>
            <person name="Hines S."/>
            <person name="Lewis L."/>
            <person name="Deramo C."/>
            <person name="Delgado O."/>
            <person name="Dugan-Rocha S."/>
            <person name="Miner G."/>
            <person name="Morgan M."/>
            <person name="Hawes A."/>
            <person name="Gill R."/>
            <person name="Holt R.A."/>
            <person name="Adams M.D."/>
            <person name="Amanatides P.G."/>
            <person name="Baden-Tillson H."/>
            <person name="Barnstead M."/>
            <person name="Chin S."/>
            <person name="Evans C.A."/>
            <person name="Ferriera S."/>
            <person name="Fosler C."/>
            <person name="Glodek A."/>
            <person name="Gu Z."/>
            <person name="Jennings D."/>
            <person name="Kraft C.L."/>
            <person name="Nguyen T."/>
            <person name="Pfannkoch C.M."/>
            <person name="Sitter C."/>
            <person name="Sutton G.G."/>
            <person name="Venter J.C."/>
            <person name="Woodage T."/>
            <person name="Smith D."/>
            <person name="Lee H.-M."/>
            <person name="Gustafson E."/>
            <person name="Cahill P."/>
            <person name="Kana A."/>
            <person name="Doucette-Stamm L."/>
            <person name="Weinstock K."/>
            <person name="Fechtel K."/>
            <person name="Weiss R.B."/>
            <person name="Dunn D.M."/>
            <person name="Green E.D."/>
            <person name="Blakesley R.W."/>
            <person name="Bouffard G.G."/>
            <person name="De Jong P.J."/>
            <person name="Osoegawa K."/>
            <person name="Zhu B."/>
            <person name="Marra M."/>
            <person name="Schein J."/>
            <person name="Bosdet I."/>
            <person name="Fjell C."/>
            <person name="Jones S."/>
            <person name="Krzywinski M."/>
            <person name="Mathewson C."/>
            <person name="Siddiqui A."/>
            <person name="Wye N."/>
            <person name="McPherson J."/>
            <person name="Zhao S."/>
            <person name="Fraser C.M."/>
            <person name="Shetty J."/>
            <person name="Shatsman S."/>
            <person name="Geer K."/>
            <person name="Chen Y."/>
            <person name="Abramzon S."/>
            <person name="Nierman W.C."/>
            <person name="Havlak P.H."/>
            <person name="Chen R."/>
            <person name="Durbin K.J."/>
            <person name="Egan A."/>
            <person name="Ren Y."/>
            <person name="Song X.-Z."/>
            <person name="Li B."/>
            <person name="Liu Y."/>
            <person name="Qin X."/>
            <person name="Cawley S."/>
            <person name="Cooney A.J."/>
            <person name="D'Souza L.M."/>
            <person name="Martin K."/>
            <person name="Wu J.Q."/>
            <person name="Gonzalez-Garay M.L."/>
            <person name="Jackson A.R."/>
            <person name="Kalafus K.J."/>
            <person name="McLeod M.P."/>
            <person name="Milosavljevic A."/>
            <person name="Virk D."/>
            <person name="Volkov A."/>
            <person name="Wheeler D.A."/>
            <person name="Zhang Z."/>
            <person name="Bailey J.A."/>
            <person name="Eichler E.E."/>
            <person name="Tuzun E."/>
            <person name="Birney E."/>
            <person name="Mongin E."/>
            <person name="Ureta-Vidal A."/>
            <person name="Woodwark C."/>
            <person name="Zdobnov E."/>
            <person name="Bork P."/>
            <person name="Suyama M."/>
            <person name="Torrents D."/>
            <person name="Alexandersson M."/>
            <person name="Trask B.J."/>
            <person name="Young J.M."/>
            <person name="Huang H."/>
            <person name="Wang H."/>
            <person name="Xing H."/>
            <person name="Daniels S."/>
            <person name="Gietzen D."/>
            <person name="Schmidt J."/>
            <person name="Stevens K."/>
            <person name="Vitt U."/>
            <person name="Wingrove J."/>
            <person name="Camara F."/>
            <person name="Mar Alba M."/>
            <person name="Abril J.F."/>
            <person name="Guigo R."/>
            <person name="Smit A."/>
            <person name="Dubchak I."/>
            <person name="Rubin E.M."/>
            <person name="Couronne O."/>
            <person name="Poliakov A."/>
            <person name="Huebner N."/>
            <person name="Ganten D."/>
            <person name="Goesele C."/>
            <person name="Hummel O."/>
            <person name="Kreitler T."/>
            <person name="Lee Y.-A."/>
            <person name="Monti J."/>
            <person name="Schulz H."/>
            <person name="Zimdahl H."/>
            <person name="Himmelbauer H."/>
            <person name="Lehrach H."/>
            <person name="Jacob H.J."/>
            <person name="Bromberg S."/>
            <person name="Gullings-Handley J."/>
            <person name="Jensen-Seaman M.I."/>
            <person name="Kwitek A.E."/>
            <person name="Lazar J."/>
            <person name="Pasko D."/>
            <person name="Tonellato P.J."/>
            <person name="Twigger S."/>
            <person name="Ponting C.P."/>
            <person name="Duarte J.M."/>
            <person name="Rice S."/>
            <person name="Goodstadt L."/>
            <person name="Beatson S.A."/>
            <person name="Emes R.D."/>
            <person name="Winter E.E."/>
            <person name="Webber C."/>
            <person name="Brandt P."/>
            <person name="Nyakatura G."/>
            <person name="Adetobi M."/>
            <person name="Chiaromonte F."/>
            <person name="Elnitski L."/>
            <person name="Eswara P."/>
            <person name="Hardison R.C."/>
            <person name="Hou M."/>
            <person name="Kolbe D."/>
            <person name="Makova K."/>
            <person name="Miller W."/>
            <person name="Nekrutenko A."/>
            <person name="Riemer C."/>
            <person name="Schwartz S."/>
            <person name="Taylor J."/>
            <person name="Yang S."/>
            <person name="Zhang Y."/>
            <person name="Lindpaintner K."/>
            <person name="Andrews T.D."/>
            <person name="Caccamo M."/>
            <person name="Clamp M."/>
            <person name="Clarke L."/>
            <person name="Curwen V."/>
            <person name="Durbin R.M."/>
            <person name="Eyras E."/>
            <person name="Searle S.M."/>
            <person name="Cooper G.M."/>
            <person name="Batzoglou S."/>
            <person name="Brudno M."/>
            <person name="Sidow A."/>
            <person name="Stone E.A."/>
            <person name="Payseur B.A."/>
            <person name="Bourque G."/>
            <person name="Lopez-Otin C."/>
            <person name="Puente X.S."/>
            <person name="Chakrabarti K."/>
            <person name="Chatterji S."/>
            <person name="Dewey C."/>
            <person name="Pachter L."/>
            <person name="Bray N."/>
            <person name="Yap V.B."/>
            <person name="Caspi A."/>
            <person name="Tesler G."/>
            <person name="Pevzner P.A."/>
            <person name="Haussler D."/>
            <person name="Roskin K.M."/>
            <person name="Baertsch R."/>
            <person name="Clawson H."/>
            <person name="Furey T.S."/>
            <person name="Hinrichs A.S."/>
            <person name="Karolchik D."/>
            <person name="Kent W.J."/>
            <person name="Rosenbloom K.R."/>
            <person name="Trumbower H."/>
            <person name="Weirauch M."/>
            <person name="Cooper D.N."/>
            <person name="Stenson P.D."/>
            <person name="Ma B."/>
            <person name="Brent M."/>
            <person name="Arumugam M."/>
            <person name="Shteynberg D."/>
            <person name="Copley R.R."/>
            <person name="Taylor M.S."/>
            <person name="Riethman H."/>
            <person name="Mudunuri U."/>
            <person name="Peterson J."/>
            <person name="Guyer M."/>
            <person name="Felsenfeld A."/>
            <person name="Old S."/>
            <person name="Mockrin S."/>
            <person name="Collins F.S."/>
        </authorList>
    </citation>
    <scope>NUCLEOTIDE SEQUENCE [LARGE SCALE GENOMIC DNA]</scope>
    <source>
        <strain>Brown Norway</strain>
    </source>
</reference>
<reference key="2">
    <citation type="submission" date="2005-09" db="EMBL/GenBank/DDBJ databases">
        <authorList>
            <person name="Mural R.J."/>
            <person name="Adams M.D."/>
            <person name="Myers E.W."/>
            <person name="Smith H.O."/>
            <person name="Venter J.C."/>
        </authorList>
    </citation>
    <scope>NUCLEOTIDE SEQUENCE [LARGE SCALE GENOMIC DNA]</scope>
    <source>
        <strain>Brown Norway</strain>
    </source>
</reference>
<reference key="3">
    <citation type="journal article" date="2004" name="Genome Res.">
        <title>The status, quality, and expansion of the NIH full-length cDNA project: the Mammalian Gene Collection (MGC).</title>
        <authorList>
            <consortium name="The MGC Project Team"/>
        </authorList>
    </citation>
    <scope>NUCLEOTIDE SEQUENCE [LARGE SCALE MRNA]</scope>
    <source>
        <tissue>Kidney</tissue>
    </source>
</reference>
<reference key="4">
    <citation type="journal article" date="2003" name="Biochemistry">
        <title>SRp55 is a regulator of calcitonin/CGRP alternative RNA splicing.</title>
        <authorList>
            <person name="Tran Q."/>
            <person name="Roesser J.R."/>
        </authorList>
    </citation>
    <scope>TISSUE SPECIFICITY</scope>
    <scope>SUBCELLULAR LOCATION</scope>
</reference>
<reference key="5">
    <citation type="journal article" date="2012" name="J. Biol. Chem.">
        <title>Dual-specificity tyrosine phosphorylation-regulated kinase 1A (Dyrk1A) modulates serine/arginine-rich protein 55 (SRp55)-promoted Tau exon 10 inclusion.</title>
        <authorList>
            <person name="Yin X."/>
            <person name="Jin N."/>
            <person name="Gu J."/>
            <person name="Shi J."/>
            <person name="Zhou J."/>
            <person name="Gong C.X."/>
            <person name="Iqbal K."/>
            <person name="Grundke-Iqbal I."/>
            <person name="Liu F."/>
        </authorList>
    </citation>
    <scope>INTERACTION WITH DYRK1A</scope>
    <scope>TISSUE SPECIFICITY</scope>
</reference>
<reference key="6">
    <citation type="journal article" date="2012" name="Nat. Commun.">
        <title>Quantitative maps of protein phosphorylation sites across 14 different rat organs and tissues.</title>
        <authorList>
            <person name="Lundby A."/>
            <person name="Secher A."/>
            <person name="Lage K."/>
            <person name="Nordsborg N.B."/>
            <person name="Dmytriyev A."/>
            <person name="Lundby C."/>
            <person name="Olsen J.V."/>
        </authorList>
    </citation>
    <scope>PHOSPHORYLATION [LARGE SCALE ANALYSIS] AT SER-45 AND SER-303</scope>
    <scope>IDENTIFICATION BY MASS SPECTROMETRY [LARGE SCALE ANALYSIS]</scope>
</reference>
<evidence type="ECO:0000250" key="1"/>
<evidence type="ECO:0000250" key="2">
    <source>
        <dbReference type="UniProtKB" id="Q13247"/>
    </source>
</evidence>
<evidence type="ECO:0000250" key="3">
    <source>
        <dbReference type="UniProtKB" id="Q3TWW8"/>
    </source>
</evidence>
<evidence type="ECO:0000255" key="4">
    <source>
        <dbReference type="PROSITE-ProRule" id="PRU00176"/>
    </source>
</evidence>
<evidence type="ECO:0000256" key="5">
    <source>
        <dbReference type="SAM" id="MobiDB-lite"/>
    </source>
</evidence>
<evidence type="ECO:0000269" key="6">
    <source>
    </source>
</evidence>
<evidence type="ECO:0000269" key="7">
    <source>
    </source>
</evidence>
<evidence type="ECO:0000305" key="8"/>
<evidence type="ECO:0007744" key="9">
    <source>
    </source>
</evidence>
<organism>
    <name type="scientific">Rattus norvegicus</name>
    <name type="common">Rat</name>
    <dbReference type="NCBI Taxonomy" id="10116"/>
    <lineage>
        <taxon>Eukaryota</taxon>
        <taxon>Metazoa</taxon>
        <taxon>Chordata</taxon>
        <taxon>Craniata</taxon>
        <taxon>Vertebrata</taxon>
        <taxon>Euteleostomi</taxon>
        <taxon>Mammalia</taxon>
        <taxon>Eutheria</taxon>
        <taxon>Euarchontoglires</taxon>
        <taxon>Glires</taxon>
        <taxon>Rodentia</taxon>
        <taxon>Myomorpha</taxon>
        <taxon>Muroidea</taxon>
        <taxon>Muridae</taxon>
        <taxon>Murinae</taxon>
        <taxon>Rattus</taxon>
    </lineage>
</organism>
<gene>
    <name type="primary">Srsf6</name>
    <name type="synonym">Sfrs6</name>
    <name type="synonym">Srp55</name>
</gene>
<comment type="function">
    <text evidence="1">Plays a role in constitutive splicing and modulates the selection of alternative splice sites. Plays a role in the alternative splicing of MAPT/Tau exon 10. Binds to alternative exons of TNC pre-mRNA and promotes the expression of alternatively spliced TNC. Plays a role in wound healing and in the regulation of keratinocyte differentiation and proliferation via its role in alternative splicing (By similarity).</text>
</comment>
<comment type="subunit">
    <text evidence="1 7">Binds SREK1/SFRS12 (By similarity). Interacts with DYRK1A.</text>
</comment>
<comment type="subcellular location">
    <subcellularLocation>
        <location evidence="6">Nucleus</location>
    </subcellularLocation>
    <subcellularLocation>
        <location evidence="2">Nucleus speckle</location>
    </subcellularLocation>
</comment>
<comment type="tissue specificity">
    <text evidence="6 7">Detected in liver and brain (at protein level).</text>
</comment>
<comment type="PTM">
    <text evidence="1">Extensively phosphorylated on serine residues in the RS domain. Phosphorylated by DYRK1A, probably in the RS domain. Phosphorylation by DYRK1A modulates alternative splice site selection and inhibits the expression of MAPT/Tau exon 10 (By similarity).</text>
</comment>
<comment type="similarity">
    <text evidence="8">Belongs to the splicing factor SR family.</text>
</comment>
<feature type="chain" id="PRO_0000426096" description="Serine/arginine-rich splicing factor 6">
    <location>
        <begin position="1"/>
        <end position="339"/>
    </location>
</feature>
<feature type="domain" description="RRM 1" evidence="4">
    <location>
        <begin position="2"/>
        <end position="72"/>
    </location>
</feature>
<feature type="domain" description="RRM 2" evidence="4">
    <location>
        <begin position="110"/>
        <end position="183"/>
    </location>
</feature>
<feature type="region of interest" description="Disordered" evidence="5">
    <location>
        <begin position="75"/>
        <end position="103"/>
    </location>
</feature>
<feature type="region of interest" description="Disordered" evidence="5">
    <location>
        <begin position="176"/>
        <end position="339"/>
    </location>
</feature>
<feature type="compositionally biased region" description="Basic residues" evidence="5">
    <location>
        <begin position="185"/>
        <end position="250"/>
    </location>
</feature>
<feature type="compositionally biased region" description="Basic and acidic residues" evidence="5">
    <location>
        <begin position="280"/>
        <end position="291"/>
    </location>
</feature>
<feature type="compositionally biased region" description="Basic residues" evidence="5">
    <location>
        <begin position="321"/>
        <end position="339"/>
    </location>
</feature>
<feature type="modified residue" description="Phosphoserine" evidence="9">
    <location>
        <position position="45"/>
    </location>
</feature>
<feature type="modified residue" description="Phosphoserine" evidence="2">
    <location>
        <position position="81"/>
    </location>
</feature>
<feature type="modified residue" description="Phosphoserine" evidence="2">
    <location>
        <position position="84"/>
    </location>
</feature>
<feature type="modified residue" description="N6-acetyllysine" evidence="3">
    <location>
        <position position="165"/>
    </location>
</feature>
<feature type="modified residue" description="Phosphoserine" evidence="2">
    <location>
        <position position="297"/>
    </location>
</feature>
<feature type="modified residue" description="Phosphoserine" evidence="2">
    <location>
        <position position="299"/>
    </location>
</feature>
<feature type="modified residue" description="Phosphoserine" evidence="9">
    <location>
        <position position="303"/>
    </location>
</feature>
<feature type="modified residue" description="Phosphoserine" evidence="2">
    <location>
        <position position="314"/>
    </location>
</feature>
<feature type="modified residue" description="Phosphoserine" evidence="2">
    <location>
        <position position="316"/>
    </location>
</feature>
<feature type="cross-link" description="Glycyl lysine isopeptide (Lys-Gly) (interchain with G-Cter in SUMO2)" evidence="2">
    <location>
        <position position="182"/>
    </location>
</feature>
<feature type="sequence conflict" description="In Ref. 3; AAH87121." evidence="8" ref="3">
    <original>D</original>
    <variation>Y</variation>
    <location>
        <position position="181"/>
    </location>
</feature>